<name>VP4_ROTHQ</name>
<feature type="chain" id="PRO_0000041075" description="Outer capsid protein VP4" evidence="1">
    <location>
        <begin position="1"/>
        <end position="776"/>
    </location>
</feature>
<feature type="chain" id="PRO_0000041076" description="Outer capsid protein VP8*" evidence="1">
    <location>
        <begin position="1"/>
        <end position="231"/>
    </location>
</feature>
<feature type="chain" id="PRO_0000041077" description="Outer capsid protein VP5*" evidence="1">
    <location>
        <begin position="248"/>
        <end position="776"/>
    </location>
</feature>
<feature type="region of interest" description="Spike head" evidence="1">
    <location>
        <begin position="65"/>
        <end position="224"/>
    </location>
</feature>
<feature type="region of interest" description="Spike body and stalk (antigen domain)" evidence="1">
    <location>
        <begin position="248"/>
        <end position="479"/>
    </location>
</feature>
<feature type="region of interest" description="Hydrophobic; possible role in virus entry into host cell" evidence="1">
    <location>
        <begin position="389"/>
        <end position="409"/>
    </location>
</feature>
<feature type="region of interest" description="Spike foot" evidence="1">
    <location>
        <begin position="510"/>
        <end position="776"/>
    </location>
</feature>
<feature type="coiled-coil region" evidence="1">
    <location>
        <begin position="484"/>
        <end position="511"/>
    </location>
</feature>
<feature type="short sequence motif" description="DGE motif; interaction with ITGA2/ITGB1 heterodimer" evidence="1">
    <location>
        <begin position="308"/>
        <end position="310"/>
    </location>
</feature>
<feature type="short sequence motif" description="YGL motif; interaction with ITGA4" evidence="1">
    <location>
        <begin position="448"/>
        <end position="450"/>
    </location>
</feature>
<feature type="site" description="Cleavage" evidence="1">
    <location>
        <begin position="231"/>
        <end position="232"/>
    </location>
</feature>
<feature type="site" description="Cleavage" evidence="1">
    <location>
        <begin position="241"/>
        <end position="242"/>
    </location>
</feature>
<feature type="site" description="Cleavage; associated with enhancement of infectivity" evidence="1">
    <location>
        <begin position="247"/>
        <end position="248"/>
    </location>
</feature>
<feature type="disulfide bond" evidence="1">
    <location>
        <begin position="318"/>
        <end position="380"/>
    </location>
</feature>
<evidence type="ECO:0000255" key="1">
    <source>
        <dbReference type="HAMAP-Rule" id="MF_04132"/>
    </source>
</evidence>
<evidence type="ECO:0000269" key="2">
    <source>
    </source>
</evidence>
<evidence type="ECO:0000303" key="3">
    <source>
    </source>
</evidence>
<sequence length="776" mass="86889">MASLIYRQLLSNSYVTNISDEVSEIGARKTANVTVNPGPFAQTGYAPVNWGHGELSDSTLVQPTLDGPYQPTTFNLPIDYWMLIAPTQIGRVAEGTNTTNRWFACVLVELNVQNTQREYVLDGQTVQLQVSNDSSTLWKFILFIKLEKNGTYTQYSTLSTSNKLCAWMKREGRVYSYAGVTPNASESYYLTINNDDSNVSSDAEFYLIPQSQTELCTQYINNGLPPIQNTRNVVPVSLTSREIRHSRAQMNEDIVVSKTSLWKEMQYNRDITIRFKFANSIVKSGGLGYKWSEISFKPMNYQYTYTRDGEEITAHTTCSVNGVNDFTYNGGPLPTDFAISRFEVIKENSYVYIDYWDDSQAFRNMVYVRSLAADLNDVVCSGGDYSFALPVGAYPIMSGGAVTLSPAGVTLSTQFTDYVSLNSLRFRFRLAVSEPSFSISRTRLSGIYGLPAANPNNSVEYYEIAGRFSLISLVPTNDDYQTPIANSVTVRQDLERQLGELREEFNSLSQEIALSQLIDLATLPLDMFSMFSGIKSTVEAVKSMTTNIMKKFKTSNLANAISDLTNSMSDAASSISRSASVRSIGSNTTMRISTAIQTGEDLRTMTDASTQISNVSRSLRLREFTTQTDNLSFDDISAAVLKTKLDKSTQISQTTIPDIISESSEKFIPMRTYRVMDNDTGFETGIDGTFYAYRIDTFDEIPFDVEKFNRLITDSPVLSAIIDFKTLKNLNDNYGITKTQAMELLQSNPRTLKEFINSNNPIIRNRIENLIAQCRL</sequence>
<protein>
    <recommendedName>
        <fullName evidence="1">Outer capsid protein VP4</fullName>
    </recommendedName>
    <alternativeName>
        <fullName evidence="1">Hemagglutinin</fullName>
    </alternativeName>
    <component>
        <recommendedName>
            <fullName evidence="1">Outer capsid protein VP8*</fullName>
        </recommendedName>
    </component>
    <component>
        <recommendedName>
            <fullName evidence="1">Outer capsid protein VP5*</fullName>
        </recommendedName>
    </component>
</protein>
<proteinExistence type="evidence at transcript level"/>
<reference key="1">
    <citation type="journal article" date="1993" name="Virology">
        <title>Nucleotide sequence of VP4 and VP7 genes of a unique human rotavirus strain Mc35 with subgroup I and serotype 10 specificity.</title>
        <authorList>
            <person name="Urasawa T."/>
            <person name="Taniguchi K."/>
            <person name="Kobayashi N."/>
            <person name="Mise K."/>
            <person name="Hasegawa A."/>
            <person name="Yamaji Y."/>
            <person name="Urasawa S."/>
        </authorList>
    </citation>
    <scope>NUCLEOTIDE SEQUENCE [GENOMIC RNA]</scope>
</reference>
<reference key="2">
    <citation type="journal article" date="1994" name="Virology">
        <title>Species specificity and interspecies relatedness in VP4 genotypes demonstrated by VP4 sequence analysis of equine, feline, and canine rotavirus strains.</title>
        <authorList>
            <person name="Taniguchi K."/>
            <person name="Urasawa T."/>
            <person name="Urasawa S."/>
        </authorList>
    </citation>
    <scope>NUCLEOTIDE SEQUENCE [MRNA]</scope>
</reference>
<reference key="3">
    <citation type="journal article" date="2002" name="J. Virol.">
        <title>Initial interaction of rotavirus strains with N-acetylneuraminic (sialic) acid residues on the cell surface correlates with VP4 genotype, not species of origin.</title>
        <authorList>
            <person name="Ciarlet M."/>
            <person name="Ludert J.E."/>
            <person name="Iturriza-Gomara M."/>
            <person name="Liprandi F."/>
            <person name="Gray J.J."/>
            <person name="Desselberger U."/>
            <person name="Estes M.K."/>
        </authorList>
    </citation>
    <scope>SIALIC ACID INDEPENDENCY</scope>
</reference>
<reference key="4">
    <citation type="journal article" date="2006" name="Glycoconj. J.">
        <title>Role of sialic acids in rotavirus infection.</title>
        <authorList>
            <person name="Isa P."/>
            <person name="Arias C.F."/>
            <person name="Lopez S."/>
        </authorList>
    </citation>
    <scope>REVIEW</scope>
</reference>
<keyword id="KW-0167">Capsid protein</keyword>
<keyword id="KW-0175">Coiled coil</keyword>
<keyword id="KW-1015">Disulfide bond</keyword>
<keyword id="KW-0348">Hemagglutinin</keyword>
<keyword id="KW-1032">Host cell membrane</keyword>
<keyword id="KW-1035">Host cytoplasm</keyword>
<keyword id="KW-1037">Host cytoskeleton</keyword>
<keyword id="KW-1038">Host endoplasmic reticulum</keyword>
<keyword id="KW-1043">Host membrane</keyword>
<keyword id="KW-0945">Host-virus interaction</keyword>
<keyword id="KW-0472">Membrane</keyword>
<keyword id="KW-1152">Outer capsid protein</keyword>
<keyword id="KW-1161">Viral attachment to host cell</keyword>
<keyword id="KW-1162">Viral penetration into host cytoplasm</keyword>
<keyword id="KW-1173">Viral penetration via permeabilization of host membrane</keyword>
<keyword id="KW-0946">Virion</keyword>
<keyword id="KW-1160">Virus entry into host cell</keyword>
<organismHost>
    <name type="scientific">Homo sapiens</name>
    <name type="common">Human</name>
    <dbReference type="NCBI Taxonomy" id="9606"/>
</organismHost>
<dbReference type="EMBL" id="D14032">
    <property type="protein sequence ID" value="BAA03121.1"/>
    <property type="molecule type" value="Genomic_RNA"/>
</dbReference>
<dbReference type="SMR" id="Q08778"/>
<dbReference type="GO" id="GO:0044172">
    <property type="term" value="C:host cell endoplasmic reticulum-Golgi intermediate compartment"/>
    <property type="evidence" value="ECO:0007669"/>
    <property type="project" value="UniProtKB-SubCell"/>
</dbReference>
<dbReference type="GO" id="GO:0020002">
    <property type="term" value="C:host cell plasma membrane"/>
    <property type="evidence" value="ECO:0007669"/>
    <property type="project" value="UniProtKB-SubCell"/>
</dbReference>
<dbReference type="GO" id="GO:0044168">
    <property type="term" value="C:host cell rough endoplasmic reticulum"/>
    <property type="evidence" value="ECO:0007669"/>
    <property type="project" value="UniProtKB-SubCell"/>
</dbReference>
<dbReference type="GO" id="GO:0044163">
    <property type="term" value="C:host cytoskeleton"/>
    <property type="evidence" value="ECO:0007669"/>
    <property type="project" value="UniProtKB-SubCell"/>
</dbReference>
<dbReference type="GO" id="GO:0016020">
    <property type="term" value="C:membrane"/>
    <property type="evidence" value="ECO:0007669"/>
    <property type="project" value="UniProtKB-KW"/>
</dbReference>
<dbReference type="GO" id="GO:0039624">
    <property type="term" value="C:viral outer capsid"/>
    <property type="evidence" value="ECO:0007669"/>
    <property type="project" value="UniProtKB-UniRule"/>
</dbReference>
<dbReference type="GO" id="GO:0039665">
    <property type="term" value="P:permeabilization of host organelle membrane involved in viral entry into host cell"/>
    <property type="evidence" value="ECO:0007669"/>
    <property type="project" value="UniProtKB-UniRule"/>
</dbReference>
<dbReference type="GO" id="GO:0019062">
    <property type="term" value="P:virion attachment to host cell"/>
    <property type="evidence" value="ECO:0007669"/>
    <property type="project" value="UniProtKB-UniRule"/>
</dbReference>
<dbReference type="Gene3D" id="1.20.5.170">
    <property type="match status" value="1"/>
</dbReference>
<dbReference type="Gene3D" id="2.60.120.200">
    <property type="match status" value="1"/>
</dbReference>
<dbReference type="HAMAP" id="MF_04132">
    <property type="entry name" value="Rota_A_VP4"/>
    <property type="match status" value="1"/>
</dbReference>
<dbReference type="HAMAP" id="MF_04125">
    <property type="entry name" value="Rota_VP4"/>
    <property type="match status" value="1"/>
</dbReference>
<dbReference type="InterPro" id="IPR013320">
    <property type="entry name" value="ConA-like_dom_sf"/>
</dbReference>
<dbReference type="InterPro" id="IPR042546">
    <property type="entry name" value="Rota_A_VP4"/>
</dbReference>
<dbReference type="InterPro" id="IPR035330">
    <property type="entry name" value="Rota_VP4_MID"/>
</dbReference>
<dbReference type="InterPro" id="IPR038017">
    <property type="entry name" value="Rota_VP4_MID_sf"/>
</dbReference>
<dbReference type="InterPro" id="IPR000416">
    <property type="entry name" value="VP4_concanavalin-like"/>
</dbReference>
<dbReference type="InterPro" id="IPR035329">
    <property type="entry name" value="VP4_helical"/>
</dbReference>
<dbReference type="Pfam" id="PF17477">
    <property type="entry name" value="Rota_VP4_MID"/>
    <property type="match status" value="1"/>
</dbReference>
<dbReference type="Pfam" id="PF00426">
    <property type="entry name" value="VP4_haemagglut"/>
    <property type="match status" value="1"/>
</dbReference>
<dbReference type="Pfam" id="PF17478">
    <property type="entry name" value="VP4_helical"/>
    <property type="match status" value="1"/>
</dbReference>
<dbReference type="SUPFAM" id="SSF49899">
    <property type="entry name" value="Concanavalin A-like lectins/glucanases"/>
    <property type="match status" value="1"/>
</dbReference>
<dbReference type="SUPFAM" id="SSF111379">
    <property type="entry name" value="VP4 membrane interaction domain"/>
    <property type="match status" value="1"/>
</dbReference>
<organism>
    <name type="scientific">Rotavirus A (isolate RVA/Human/Thailand/Mc35/1992/G10P11[14])</name>
    <name type="common">RV-A</name>
    <dbReference type="NCBI Taxonomy" id="37136"/>
    <lineage>
        <taxon>Viruses</taxon>
        <taxon>Riboviria</taxon>
        <taxon>Orthornavirae</taxon>
        <taxon>Duplornaviricota</taxon>
        <taxon>Resentoviricetes</taxon>
        <taxon>Reovirales</taxon>
        <taxon>Sedoreoviridae</taxon>
        <taxon>Rotavirus</taxon>
        <taxon>Rotavirus A</taxon>
    </lineage>
</organism>
<accession>Q08778</accession>
<comment type="function">
    <molecule>Outer capsid protein VP4</molecule>
    <text evidence="1">Spike-forming protein that mediates virion attachment to the host epithelial cell receptors and plays a major role in cell penetration, determination of host range restriction and virulence. Rotavirus attachment and entry into the host cell probably involves multiple sequential contacts between the outer capsid proteins VP4 and VP7, and the cell receptors. It is subsequently lost, together with VP7, following virus entry into the host cell. Following entry into the host cell, low intracellular or intravesicular Ca(2+) concentration probably causes the calcium-stabilized VP7 trimers to dissociate from the virion. This step is probably necessary for the membrane-disrupting entry step and the release of VP4, which is locked onto the virion by VP7. During the virus exit from the host cell, VP4 seems to be required to target the newly formed virions to the host cell lipid rafts.</text>
</comment>
<comment type="function">
    <molecule>Outer capsid protein VP5*</molecule>
    <text evidence="1">Forms the spike 'foot' and 'body' and acts as a membrane permeabilization protein that mediates release of viral particles from endosomal compartments into the cytoplasm. During entry, the part of VP5* that protrudes from the virus folds back on itself and reorganizes from a local dimer to a trimer. This reorganization may be linked to membrane penetration by exposing VP5* hydrophobic region. In integrin-dependent strains, VP5* targets the integrin heterodimer ITGA2/ITGB1 for cell attachment.</text>
</comment>
<comment type="function">
    <molecule>Outer capsid protein VP8*</molecule>
    <text evidence="1">Forms the head of the spikes and mediates the recognition of specific host cell surface glycans. It is the viral hemagglutinin and an important target of neutralizing antibodies. In sialic acid-dependent strains, VP8* binds to host cell sialic acid, most probably a ganglioside, providing the initial contact. In some other strains, VP8* mediates the attachment to histo-blood group antigens (HBGAs) for viral entry.</text>
</comment>
<comment type="subunit">
    <molecule>Outer capsid protein VP4</molecule>
    <text evidence="1">Homotrimer. VP4 adopts a dimeric appearance above the capsid surface, while forming a trimeric base anchored inside the capsid layer. Only hints of the third molecule are observed above the capsid surface. It probably performs a series of molecular rearrangements during viral entry. Prior to trypsin cleavage, it is flexible. The priming trypsin cleavage triggers its rearrangement into rigid spikes with approximate two-fold symmetry of their protruding parts. After an unknown second triggering event, cleaved VP4 may undergo another rearrangement, in which two VP5* subunits fold back on themselves and join a third subunit to form a tightly associated trimer, shaped like a folded umbrella. Interacts with VP6. Interacts with VP7.</text>
</comment>
<comment type="subunit">
    <molecule>Outer capsid protein VP5*</molecule>
    <text evidence="1">Homotrimer. The trimer is coiled-coil stabilized by its C-terminus, however, its N-terminus, known as antigen domain or 'body', seems to be flexible allowing it to self-associate either as a dimer or a trimer.</text>
</comment>
<comment type="subcellular location">
    <molecule>Outer capsid protein VP4</molecule>
    <subcellularLocation>
        <location evidence="1">Virion</location>
    </subcellularLocation>
    <subcellularLocation>
        <location evidence="1">Host rough endoplasmic reticulum</location>
    </subcellularLocation>
    <subcellularLocation>
        <location evidence="1">Host cell membrane</location>
    </subcellularLocation>
    <subcellularLocation>
        <location evidence="1">Host cytoplasm</location>
        <location evidence="1">Host cytoskeleton</location>
    </subcellularLocation>
    <subcellularLocation>
        <location evidence="1">Host endoplasmic reticulum-Golgi intermediate compartment</location>
    </subcellularLocation>
    <text evidence="1">The outer layer contains 180 copies of VP4, grouped as 60 dimers. Immature double-layered particles assembled in the cytoplasm bud across the membrane of the endoplasmic reticulum, acquiring during this process a transient lipid membrane that is modified with the ER resident viral glycoproteins NSP4 and VP7; these enveloped particles also contain VP4. As the particles move towards the interior of the ER cisternae, the transient lipid membrane and the non-structural protein NSP4 are lost, while the virus surface proteins VP4 and VP7 rearrange to form the outermost virus protein layer, yielding mature infectious triple-layered particles. VP4 also seems to associate with lipid rafts of the host cell membrane probably for the exit of the virus from the infected cell by an alternate pathway.</text>
</comment>
<comment type="subcellular location">
    <molecule>Outer capsid protein VP8*</molecule>
    <subcellularLocation>
        <location evidence="1">Virion</location>
    </subcellularLocation>
    <text evidence="1">Outer capsid protein.</text>
</comment>
<comment type="subcellular location">
    <molecule>Outer capsid protein VP5*</molecule>
    <subcellularLocation>
        <location evidence="1">Virion</location>
    </subcellularLocation>
    <text evidence="1">Outer capsid protein.</text>
</comment>
<comment type="domain">
    <molecule>Outer capsid protein VP4</molecule>
    <text evidence="1">The VP4 spike is divided into a foot, a stalk and body, and a head.</text>
</comment>
<comment type="PTM">
    <molecule>Outer capsid protein VP4</molecule>
    <text evidence="1">Proteolytic cleavage by trypsin results in activation of VP4 functions and greatly increases infectivity. The penetration into the host cell is dependent on trypsin treatment of VP4. It produces two peptides, VP5* and VP8* that remain associated with the virion. Cleavage of VP4 by trypsin probably occurs in vivo in the lumen of the intestine prior to infection of enterocytes. Trypsin seems to be incorporated into the three-layered viral particles but remains inactive as long as the viral outer capsid is intact and would only be activated upon the solubilization of the latter.</text>
</comment>
<comment type="miscellaneous">
    <text evidence="2 3">This strain probably does not use sialic acid to attach to the host cell.</text>
</comment>
<comment type="miscellaneous">
    <text evidence="1">In group A rotaviruses, VP4 defines the P serotype.</text>
</comment>
<comment type="miscellaneous">
    <text evidence="1">Some rotavirus strains are neuraminidase-sensitive and require sialic acid to attach to the cell surface. Some rotavirus strains are integrin-dependent. Some rotavirus strains depend on ganglioside for their entry into the host cell. Hsp70 also seems to be involved in the entry of some strains.</text>
</comment>
<comment type="similarity">
    <text evidence="1">Belongs to the rotavirus VP4 family.</text>
</comment>